<keyword id="KW-0067">ATP-binding</keyword>
<keyword id="KW-0963">Cytoplasm</keyword>
<keyword id="KW-0418">Kinase</keyword>
<keyword id="KW-0460">Magnesium</keyword>
<keyword id="KW-0479">Metal-binding</keyword>
<keyword id="KW-0547">Nucleotide-binding</keyword>
<keyword id="KW-0808">Transferase</keyword>
<dbReference type="EC" id="2.7.2.1" evidence="1"/>
<dbReference type="EMBL" id="CP001056">
    <property type="protein sequence ID" value="ACD22491.1"/>
    <property type="molecule type" value="Genomic_DNA"/>
</dbReference>
<dbReference type="SMR" id="B2TJ17"/>
<dbReference type="KEGG" id="cbk:CLL_A1235"/>
<dbReference type="PATRIC" id="fig|935198.13.peg.1180"/>
<dbReference type="HOGENOM" id="CLU_020352_0_1_9"/>
<dbReference type="UniPathway" id="UPA00340">
    <property type="reaction ID" value="UER00458"/>
</dbReference>
<dbReference type="Proteomes" id="UP000001195">
    <property type="component" value="Chromosome"/>
</dbReference>
<dbReference type="GO" id="GO:0005737">
    <property type="term" value="C:cytoplasm"/>
    <property type="evidence" value="ECO:0007669"/>
    <property type="project" value="UniProtKB-SubCell"/>
</dbReference>
<dbReference type="GO" id="GO:0008776">
    <property type="term" value="F:acetate kinase activity"/>
    <property type="evidence" value="ECO:0007669"/>
    <property type="project" value="UniProtKB-UniRule"/>
</dbReference>
<dbReference type="GO" id="GO:0005524">
    <property type="term" value="F:ATP binding"/>
    <property type="evidence" value="ECO:0007669"/>
    <property type="project" value="UniProtKB-KW"/>
</dbReference>
<dbReference type="GO" id="GO:0000287">
    <property type="term" value="F:magnesium ion binding"/>
    <property type="evidence" value="ECO:0007669"/>
    <property type="project" value="UniProtKB-UniRule"/>
</dbReference>
<dbReference type="GO" id="GO:0006083">
    <property type="term" value="P:acetate metabolic process"/>
    <property type="evidence" value="ECO:0007669"/>
    <property type="project" value="TreeGrafter"/>
</dbReference>
<dbReference type="GO" id="GO:0006085">
    <property type="term" value="P:acetyl-CoA biosynthetic process"/>
    <property type="evidence" value="ECO:0007669"/>
    <property type="project" value="UniProtKB-UniRule"/>
</dbReference>
<dbReference type="CDD" id="cd24010">
    <property type="entry name" value="ASKHA_NBD_AcK_PK"/>
    <property type="match status" value="1"/>
</dbReference>
<dbReference type="Gene3D" id="3.30.420.40">
    <property type="match status" value="2"/>
</dbReference>
<dbReference type="HAMAP" id="MF_00020">
    <property type="entry name" value="Acetate_kinase"/>
    <property type="match status" value="1"/>
</dbReference>
<dbReference type="InterPro" id="IPR004372">
    <property type="entry name" value="Ac/propionate_kinase"/>
</dbReference>
<dbReference type="InterPro" id="IPR000890">
    <property type="entry name" value="Aliphatic_acid_kin_short-chain"/>
</dbReference>
<dbReference type="InterPro" id="IPR023865">
    <property type="entry name" value="Aliphatic_acid_kinase_CS"/>
</dbReference>
<dbReference type="InterPro" id="IPR043129">
    <property type="entry name" value="ATPase_NBD"/>
</dbReference>
<dbReference type="NCBIfam" id="TIGR00016">
    <property type="entry name" value="ackA"/>
    <property type="match status" value="1"/>
</dbReference>
<dbReference type="PANTHER" id="PTHR21060">
    <property type="entry name" value="ACETATE KINASE"/>
    <property type="match status" value="1"/>
</dbReference>
<dbReference type="PANTHER" id="PTHR21060:SF15">
    <property type="entry name" value="ACETATE KINASE-RELATED"/>
    <property type="match status" value="1"/>
</dbReference>
<dbReference type="Pfam" id="PF00871">
    <property type="entry name" value="Acetate_kinase"/>
    <property type="match status" value="1"/>
</dbReference>
<dbReference type="PIRSF" id="PIRSF000722">
    <property type="entry name" value="Acetate_prop_kin"/>
    <property type="match status" value="1"/>
</dbReference>
<dbReference type="PRINTS" id="PR00471">
    <property type="entry name" value="ACETATEKNASE"/>
</dbReference>
<dbReference type="SUPFAM" id="SSF53067">
    <property type="entry name" value="Actin-like ATPase domain"/>
    <property type="match status" value="2"/>
</dbReference>
<dbReference type="PROSITE" id="PS01075">
    <property type="entry name" value="ACETATE_KINASE_1"/>
    <property type="match status" value="1"/>
</dbReference>
<dbReference type="PROSITE" id="PS01076">
    <property type="entry name" value="ACETATE_KINASE_2"/>
    <property type="match status" value="1"/>
</dbReference>
<proteinExistence type="inferred from homology"/>
<evidence type="ECO:0000255" key="1">
    <source>
        <dbReference type="HAMAP-Rule" id="MF_00020"/>
    </source>
</evidence>
<reference key="1">
    <citation type="submission" date="2008-04" db="EMBL/GenBank/DDBJ databases">
        <title>Complete sequence of Clostridium botulinum strain Eklund.</title>
        <authorList>
            <person name="Brinkac L.M."/>
            <person name="Brown J.L."/>
            <person name="Bruce D."/>
            <person name="Detter C."/>
            <person name="Munk C."/>
            <person name="Smith L.A."/>
            <person name="Smith T.J."/>
            <person name="Sutton G."/>
            <person name="Brettin T.S."/>
        </authorList>
    </citation>
    <scope>NUCLEOTIDE SEQUENCE [LARGE SCALE GENOMIC DNA]</scope>
    <source>
        <strain>Eklund 17B / Type B</strain>
    </source>
</reference>
<accession>B2TJ17</accession>
<organism>
    <name type="scientific">Clostridium botulinum (strain Eklund 17B / Type B)</name>
    <dbReference type="NCBI Taxonomy" id="935198"/>
    <lineage>
        <taxon>Bacteria</taxon>
        <taxon>Bacillati</taxon>
        <taxon>Bacillota</taxon>
        <taxon>Clostridia</taxon>
        <taxon>Eubacteriales</taxon>
        <taxon>Clostridiaceae</taxon>
        <taxon>Clostridium</taxon>
    </lineage>
</organism>
<name>ACKA_CLOBB</name>
<sequence length="398" mass="43465">MKVLVINCGSSSLKYQLIDMTTEDALAEGLVERIGINGSILTQKVKGREKYIVEQPLKDHQDAIELVLKSLIDGNHGVIKSMDEISAVGHRVVHGGEKYSKSVLVNDEVMKNIEECIKLAPLHNPPNIIGIKACEELMPNTPMVCVFDTAFHQTMSEKAYMYPLPYEYYTEDHIRKYGFHGTSHKYVANKVAELMKKDASELKTVTCHLGNGVSITAVDGGKSIDTTMGFTPLAGTIMGSRCGDIDPAIVTYLIKEKGYSADEVNDILNKKSGILGVSGVGTDFRDIRSAIGENNKRAILATDIFGYQIKKQIGAYAVAMGGLDTIVFTAGIGEHAPEVRIRALTGLEFIGIELDEEKNNSHDIGEGLLISKESSKVKVYVIPTNEELMIAKETLALV</sequence>
<protein>
    <recommendedName>
        <fullName evidence="1">Acetate kinase</fullName>
        <ecNumber evidence="1">2.7.2.1</ecNumber>
    </recommendedName>
    <alternativeName>
        <fullName evidence="1">Acetokinase</fullName>
    </alternativeName>
</protein>
<feature type="chain" id="PRO_1000089967" description="Acetate kinase">
    <location>
        <begin position="1"/>
        <end position="398"/>
    </location>
</feature>
<feature type="active site" description="Proton donor/acceptor" evidence="1">
    <location>
        <position position="148"/>
    </location>
</feature>
<feature type="binding site" evidence="1">
    <location>
        <position position="7"/>
    </location>
    <ligand>
        <name>Mg(2+)</name>
        <dbReference type="ChEBI" id="CHEBI:18420"/>
    </ligand>
</feature>
<feature type="binding site" evidence="1">
    <location>
        <position position="14"/>
    </location>
    <ligand>
        <name>ATP</name>
        <dbReference type="ChEBI" id="CHEBI:30616"/>
    </ligand>
</feature>
<feature type="binding site" evidence="1">
    <location>
        <position position="91"/>
    </location>
    <ligand>
        <name>substrate</name>
    </ligand>
</feature>
<feature type="binding site" evidence="1">
    <location>
        <begin position="208"/>
        <end position="212"/>
    </location>
    <ligand>
        <name>ATP</name>
        <dbReference type="ChEBI" id="CHEBI:30616"/>
    </ligand>
</feature>
<feature type="binding site" evidence="1">
    <location>
        <begin position="283"/>
        <end position="285"/>
    </location>
    <ligand>
        <name>ATP</name>
        <dbReference type="ChEBI" id="CHEBI:30616"/>
    </ligand>
</feature>
<feature type="binding site" evidence="1">
    <location>
        <begin position="331"/>
        <end position="335"/>
    </location>
    <ligand>
        <name>ATP</name>
        <dbReference type="ChEBI" id="CHEBI:30616"/>
    </ligand>
</feature>
<feature type="binding site" evidence="1">
    <location>
        <position position="386"/>
    </location>
    <ligand>
        <name>Mg(2+)</name>
        <dbReference type="ChEBI" id="CHEBI:18420"/>
    </ligand>
</feature>
<feature type="site" description="Transition state stabilizer" evidence="1">
    <location>
        <position position="180"/>
    </location>
</feature>
<feature type="site" description="Transition state stabilizer" evidence="1">
    <location>
        <position position="241"/>
    </location>
</feature>
<comment type="function">
    <text evidence="1">Catalyzes the formation of acetyl phosphate from acetate and ATP. Can also catalyze the reverse reaction.</text>
</comment>
<comment type="catalytic activity">
    <reaction evidence="1">
        <text>acetate + ATP = acetyl phosphate + ADP</text>
        <dbReference type="Rhea" id="RHEA:11352"/>
        <dbReference type="ChEBI" id="CHEBI:22191"/>
        <dbReference type="ChEBI" id="CHEBI:30089"/>
        <dbReference type="ChEBI" id="CHEBI:30616"/>
        <dbReference type="ChEBI" id="CHEBI:456216"/>
        <dbReference type="EC" id="2.7.2.1"/>
    </reaction>
</comment>
<comment type="cofactor">
    <cofactor evidence="1">
        <name>Mg(2+)</name>
        <dbReference type="ChEBI" id="CHEBI:18420"/>
    </cofactor>
    <cofactor evidence="1">
        <name>Mn(2+)</name>
        <dbReference type="ChEBI" id="CHEBI:29035"/>
    </cofactor>
    <text evidence="1">Mg(2+). Can also accept Mn(2+).</text>
</comment>
<comment type="pathway">
    <text evidence="1">Metabolic intermediate biosynthesis; acetyl-CoA biosynthesis; acetyl-CoA from acetate: step 1/2.</text>
</comment>
<comment type="subunit">
    <text evidence="1">Homodimer.</text>
</comment>
<comment type="subcellular location">
    <subcellularLocation>
        <location evidence="1">Cytoplasm</location>
    </subcellularLocation>
</comment>
<comment type="similarity">
    <text evidence="1">Belongs to the acetokinase family.</text>
</comment>
<gene>
    <name evidence="1" type="primary">ackA</name>
    <name type="ordered locus">CLL_A1235</name>
</gene>